<dbReference type="EMBL" id="U00090">
    <property type="protein sequence ID" value="AAB91703.1"/>
    <property type="molecule type" value="Genomic_DNA"/>
</dbReference>
<dbReference type="RefSeq" id="NP_443901.1">
    <property type="nucleotide sequence ID" value="NC_000914.2"/>
</dbReference>
<dbReference type="RefSeq" id="WP_010875341.1">
    <property type="nucleotide sequence ID" value="NC_000914.2"/>
</dbReference>
<dbReference type="KEGG" id="rhi:NGR_a03250"/>
<dbReference type="PATRIC" id="fig|394.7.peg.335"/>
<dbReference type="eggNOG" id="ENOG5032TCX">
    <property type="taxonomic scope" value="Bacteria"/>
</dbReference>
<dbReference type="HOGENOM" id="CLU_101382_0_0_5"/>
<dbReference type="OrthoDB" id="7860705at2"/>
<dbReference type="Proteomes" id="UP000001054">
    <property type="component" value="Plasmid pNGR234a"/>
</dbReference>
<dbReference type="InterPro" id="IPR010767">
    <property type="entry name" value="Phage_CGC-2007_Cje0229"/>
</dbReference>
<dbReference type="Pfam" id="PF07087">
    <property type="entry name" value="DUF1353"/>
    <property type="match status" value="1"/>
</dbReference>
<proteinExistence type="inferred from homology"/>
<gene>
    <name type="ordered locus">NGR_a03250</name>
    <name type="ORF">y4iH</name>
</gene>
<keyword id="KW-0614">Plasmid</keyword>
<keyword id="KW-1185">Reference proteome</keyword>
<keyword id="KW-0732">Signal</keyword>
<protein>
    <recommendedName>
        <fullName>Uncharacterized protein y4iH</fullName>
    </recommendedName>
</protein>
<organism>
    <name type="scientific">Sinorhizobium fredii (strain NBRC 101917 / NGR234)</name>
    <dbReference type="NCBI Taxonomy" id="394"/>
    <lineage>
        <taxon>Bacteria</taxon>
        <taxon>Pseudomonadati</taxon>
        <taxon>Pseudomonadota</taxon>
        <taxon>Alphaproteobacteria</taxon>
        <taxon>Hyphomicrobiales</taxon>
        <taxon>Rhizobiaceae</taxon>
        <taxon>Sinorhizobium/Ensifer group</taxon>
        <taxon>Sinorhizobium</taxon>
    </lineage>
</organism>
<reference key="1">
    <citation type="journal article" date="1997" name="Nature">
        <title>Molecular basis of symbiosis between Rhizobium and legumes.</title>
        <authorList>
            <person name="Freiberg C.A."/>
            <person name="Fellay R."/>
            <person name="Bairoch A."/>
            <person name="Broughton W.J."/>
            <person name="Rosenthal A."/>
            <person name="Perret X."/>
        </authorList>
    </citation>
    <scope>NUCLEOTIDE SEQUENCE [LARGE SCALE GENOMIC DNA]</scope>
    <source>
        <strain>NBRC 101917 / NGR234</strain>
    </source>
</reference>
<reference key="2">
    <citation type="journal article" date="2009" name="Appl. Environ. Microbiol.">
        <title>Rhizobium sp. strain NGR234 possesses a remarkable number of secretion systems.</title>
        <authorList>
            <person name="Schmeisser C."/>
            <person name="Liesegang H."/>
            <person name="Krysciak D."/>
            <person name="Bakkou N."/>
            <person name="Le Quere A."/>
            <person name="Wollherr A."/>
            <person name="Heinemeyer I."/>
            <person name="Morgenstern B."/>
            <person name="Pommerening-Roeser A."/>
            <person name="Flores M."/>
            <person name="Palacios R."/>
            <person name="Brenner S."/>
            <person name="Gottschalk G."/>
            <person name="Schmitz R.A."/>
            <person name="Broughton W.J."/>
            <person name="Perret X."/>
            <person name="Strittmatter A.W."/>
            <person name="Streit W.R."/>
        </authorList>
    </citation>
    <scope>NUCLEOTIDE SEQUENCE [LARGE SCALE GENOMIC DNA]</scope>
    <source>
        <strain>NBRC 101917 / NGR234</strain>
    </source>
</reference>
<evidence type="ECO:0000255" key="1"/>
<evidence type="ECO:0000256" key="2">
    <source>
        <dbReference type="SAM" id="MobiDB-lite"/>
    </source>
</evidence>
<sequence>MKTMVAMLLAAVGVAVSASSTLAVNFCQSNKDRNCFTGSFGLVDIPGDASHKLLKADFGYVDLNGVGWQTNKETKTDGASIPPLLQPFVGSPWEDGYIRAAVIHDWYCDRHVRTWKETHRVFYDTMLASGLEKPKAKLLFYAVYAFGPRWGYLVPGEKCAAGKNCIQMTGKDAAFVQLPGELADQSSAGELKAIKATIDLKERSGDALTLDELMAIADEAHPKQTLRDQRPAGGDEITK</sequence>
<name>Y4IH_SINFN</name>
<feature type="signal peptide" evidence="1">
    <location>
        <begin position="1"/>
        <end position="23"/>
    </location>
</feature>
<feature type="chain" id="PRO_0000014166" description="Uncharacterized protein y4iH">
    <location>
        <begin position="24"/>
        <end position="239"/>
    </location>
</feature>
<feature type="region of interest" description="Disordered" evidence="2">
    <location>
        <begin position="220"/>
        <end position="239"/>
    </location>
</feature>
<feature type="compositionally biased region" description="Basic and acidic residues" evidence="2">
    <location>
        <begin position="220"/>
        <end position="230"/>
    </location>
</feature>
<accession>P55491</accession>
<geneLocation type="plasmid">
    <name>sym pNGR234a</name>
</geneLocation>